<protein>
    <recommendedName>
        <fullName>Biotin carboxyl carrier protein of acetyl-CoA carboxylase</fullName>
        <shortName>BCCP</shortName>
    </recommendedName>
</protein>
<sequence length="163" mass="18084">MDLKQIEKLMIAMGRNKMKRIAIKRDGFELELERDTGPNIQEPVFYDNRLFAGFTQERPIPSDQNLGNPIVKEVGEKKEDKPVEGDFIVSPLVGTFYGAPSPESPAFVKPGDIVSEDTVVCIVEAMKVMNEVKAGMAGRVEEVLITNGDPVQFGSKLFRIVKA</sequence>
<evidence type="ECO:0000250" key="1"/>
<evidence type="ECO:0000255" key="2">
    <source>
        <dbReference type="PROSITE-ProRule" id="PRU01066"/>
    </source>
</evidence>
<name>BCCP_CHLMU</name>
<accession>Q9PKR5</accession>
<gene>
    <name type="primary">accB</name>
    <name type="ordered locus">TC_0399</name>
</gene>
<dbReference type="EMBL" id="AE002160">
    <property type="protein sequence ID" value="AAF39256.1"/>
    <property type="molecule type" value="Genomic_DNA"/>
</dbReference>
<dbReference type="PIR" id="C81708">
    <property type="entry name" value="C81708"/>
</dbReference>
<dbReference type="RefSeq" id="WP_010230365.1">
    <property type="nucleotide sequence ID" value="NZ_CP063055.1"/>
</dbReference>
<dbReference type="SMR" id="Q9PKR5"/>
<dbReference type="GeneID" id="1245751"/>
<dbReference type="KEGG" id="cmu:TC_0399"/>
<dbReference type="eggNOG" id="COG0511">
    <property type="taxonomic scope" value="Bacteria"/>
</dbReference>
<dbReference type="HOGENOM" id="CLU_016733_3_0_0"/>
<dbReference type="OrthoDB" id="9807469at2"/>
<dbReference type="UniPathway" id="UPA00094"/>
<dbReference type="Proteomes" id="UP000000800">
    <property type="component" value="Chromosome"/>
</dbReference>
<dbReference type="GO" id="GO:0009317">
    <property type="term" value="C:acetyl-CoA carboxylase complex"/>
    <property type="evidence" value="ECO:0007669"/>
    <property type="project" value="InterPro"/>
</dbReference>
<dbReference type="GO" id="GO:0003989">
    <property type="term" value="F:acetyl-CoA carboxylase activity"/>
    <property type="evidence" value="ECO:0007669"/>
    <property type="project" value="InterPro"/>
</dbReference>
<dbReference type="GO" id="GO:0006633">
    <property type="term" value="P:fatty acid biosynthetic process"/>
    <property type="evidence" value="ECO:0007669"/>
    <property type="project" value="UniProtKB-UniPathway"/>
</dbReference>
<dbReference type="CDD" id="cd06850">
    <property type="entry name" value="biotinyl_domain"/>
    <property type="match status" value="1"/>
</dbReference>
<dbReference type="Gene3D" id="2.40.50.100">
    <property type="match status" value="1"/>
</dbReference>
<dbReference type="InterPro" id="IPR001249">
    <property type="entry name" value="AcCoA_biotinCC"/>
</dbReference>
<dbReference type="InterPro" id="IPR001882">
    <property type="entry name" value="Biotin_BS"/>
</dbReference>
<dbReference type="InterPro" id="IPR050709">
    <property type="entry name" value="Biotin_Carboxyl_Carrier/Decarb"/>
</dbReference>
<dbReference type="InterPro" id="IPR000089">
    <property type="entry name" value="Biotin_lipoyl"/>
</dbReference>
<dbReference type="InterPro" id="IPR011053">
    <property type="entry name" value="Single_hybrid_motif"/>
</dbReference>
<dbReference type="NCBIfam" id="TIGR00531">
    <property type="entry name" value="BCCP"/>
    <property type="match status" value="1"/>
</dbReference>
<dbReference type="PANTHER" id="PTHR45266">
    <property type="entry name" value="OXALOACETATE DECARBOXYLASE ALPHA CHAIN"/>
    <property type="match status" value="1"/>
</dbReference>
<dbReference type="PANTHER" id="PTHR45266:SF3">
    <property type="entry name" value="OXALOACETATE DECARBOXYLASE ALPHA CHAIN"/>
    <property type="match status" value="1"/>
</dbReference>
<dbReference type="Pfam" id="PF00364">
    <property type="entry name" value="Biotin_lipoyl"/>
    <property type="match status" value="1"/>
</dbReference>
<dbReference type="PRINTS" id="PR01071">
    <property type="entry name" value="ACOABIOTINCC"/>
</dbReference>
<dbReference type="SUPFAM" id="SSF51230">
    <property type="entry name" value="Single hybrid motif"/>
    <property type="match status" value="1"/>
</dbReference>
<dbReference type="PROSITE" id="PS00188">
    <property type="entry name" value="BIOTIN"/>
    <property type="match status" value="1"/>
</dbReference>
<dbReference type="PROSITE" id="PS50968">
    <property type="entry name" value="BIOTINYL_LIPOYL"/>
    <property type="match status" value="1"/>
</dbReference>
<organism>
    <name type="scientific">Chlamydia muridarum (strain MoPn / Nigg)</name>
    <dbReference type="NCBI Taxonomy" id="243161"/>
    <lineage>
        <taxon>Bacteria</taxon>
        <taxon>Pseudomonadati</taxon>
        <taxon>Chlamydiota</taxon>
        <taxon>Chlamydiia</taxon>
        <taxon>Chlamydiales</taxon>
        <taxon>Chlamydiaceae</taxon>
        <taxon>Chlamydia/Chlamydophila group</taxon>
        <taxon>Chlamydia</taxon>
    </lineage>
</organism>
<proteinExistence type="inferred from homology"/>
<reference key="1">
    <citation type="journal article" date="2000" name="Nucleic Acids Res.">
        <title>Genome sequences of Chlamydia trachomatis MoPn and Chlamydia pneumoniae AR39.</title>
        <authorList>
            <person name="Read T.D."/>
            <person name="Brunham R.C."/>
            <person name="Shen C."/>
            <person name="Gill S.R."/>
            <person name="Heidelberg J.F."/>
            <person name="White O."/>
            <person name="Hickey E.K."/>
            <person name="Peterson J.D."/>
            <person name="Utterback T.R."/>
            <person name="Berry K.J."/>
            <person name="Bass S."/>
            <person name="Linher K.D."/>
            <person name="Weidman J.F."/>
            <person name="Khouri H.M."/>
            <person name="Craven B."/>
            <person name="Bowman C."/>
            <person name="Dodson R.J."/>
            <person name="Gwinn M.L."/>
            <person name="Nelson W.C."/>
            <person name="DeBoy R.T."/>
            <person name="Kolonay J.F."/>
            <person name="McClarty G."/>
            <person name="Salzberg S.L."/>
            <person name="Eisen J.A."/>
            <person name="Fraser C.M."/>
        </authorList>
    </citation>
    <scope>NUCLEOTIDE SEQUENCE [LARGE SCALE GENOMIC DNA]</scope>
    <source>
        <strain>MoPn / Nigg</strain>
    </source>
</reference>
<feature type="chain" id="PRO_0000146802" description="Biotin carboxyl carrier protein of acetyl-CoA carboxylase">
    <location>
        <begin position="1"/>
        <end position="163"/>
    </location>
</feature>
<feature type="domain" description="Biotinyl-binding" evidence="2">
    <location>
        <begin position="85"/>
        <end position="161"/>
    </location>
</feature>
<feature type="modified residue" description="N6-biotinyllysine" evidence="1 2">
    <location>
        <position position="127"/>
    </location>
</feature>
<comment type="function">
    <text evidence="1">This protein is a component of the acetyl coenzyme A carboxylase complex; first, biotin carboxylase catalyzes the carboxylation of the carrier protein and then the transcarboxylase transfers the carboxyl group to form malonyl-CoA.</text>
</comment>
<comment type="pathway">
    <text>Lipid metabolism; fatty acid biosynthesis.</text>
</comment>
<comment type="subunit">
    <text evidence="1">Homodimer.</text>
</comment>
<keyword id="KW-0092">Biotin</keyword>
<keyword id="KW-0275">Fatty acid biosynthesis</keyword>
<keyword id="KW-0276">Fatty acid metabolism</keyword>
<keyword id="KW-0444">Lipid biosynthesis</keyword>
<keyword id="KW-0443">Lipid metabolism</keyword>